<comment type="function">
    <text evidence="1 6 7">Functions as a scaffold protein and likely plays a role in N-methyl-D-aspartic acid receptor (NMDAR)-mediated synaptic excitatory transmission (PubMed:31196628). May be involved in synapse formation in cone photoreceptor cells (PubMed:29590622). May play a role in the regulation of tight junction formation (By similarity). Binds phosphatidylinositol 3,4-bisphosphate (PtdIns(3,4)P2) (By similarity). May pNF-kappa-Blay a role in the regulation of NOD2-mediated NF-kappa-B activation in immune response (By similarity).</text>
</comment>
<comment type="subunit">
    <text evidence="1 6 7">Interacts (via the second PDZ domain) with CTNND2 (via the extreme C-terminus) (By similarity). Interacts (via the second PDZ domain) with PKP4 (via the extreme C-terminus); the interaction directs FRMPD2 to the basolateral membranes (By similarity). Interacts (via the second PDZ domain) with ARVCF (via the extreme C-terminus) (By similarity). Interacts (via the second PDZ domain) with NMDAR subunits GRIN2A/GLUN2A and GRIN2B/GLUN2B (via the extreme C-terminus); the interaction is direct and is likely to promote NMDAR-mediated neural signal transmission (PubMed:31196628). Binds GRIN2A with lower affinity than GRIN2B (PubMed:31196628). Interacts (via the third PDZ domain) with LRIT1 (via the extreme C-terminus); the interaction leads to their colocalization in photoreceptor synapses (PubMed:29590622). Interacts with NOD2; the interaction is likely to trigger NOD2-mediated nuclear factor kappaB activation (By similarity).</text>
</comment>
<comment type="subcellular location">
    <subcellularLocation>
        <location evidence="1">Cytoplasm</location>
    </subcellularLocation>
    <subcellularLocation>
        <location evidence="7">Postsynaptic density</location>
    </subcellularLocation>
    <subcellularLocation>
        <location evidence="1">Basolateral cell membrane</location>
    </subcellularLocation>
    <subcellularLocation>
        <location evidence="1">Cell junction</location>
        <location evidence="1">Tight junction</location>
    </subcellularLocation>
    <text evidence="1">Colocalizes with CTNNB1, CDH1 and PKP4 at the basolateral membrane. Colocalizes with TJP1 at tight junctions. Its recruitment to cell-cell contacts requires CDH1. Colocalizes with NOD2 to the basolacteral membrane in intestinal epithelial cells.</text>
</comment>
<comment type="domain">
    <text evidence="1">The FERM and PDZ 2 domains are necessary for localization to the basolateral cell membrane. The FERM domain binds to phosphatidylinositol 3,4-bisphosphate (PtdIns(3,4)P2) and is sufficient for membrane localization.</text>
</comment>
<keyword id="KW-0002">3D-structure</keyword>
<keyword id="KW-0965">Cell junction</keyword>
<keyword id="KW-1003">Cell membrane</keyword>
<keyword id="KW-0963">Cytoplasm</keyword>
<keyword id="KW-0472">Membrane</keyword>
<keyword id="KW-1185">Reference proteome</keyword>
<keyword id="KW-0677">Repeat</keyword>
<keyword id="KW-0770">Synapse</keyword>
<keyword id="KW-0796">Tight junction</keyword>
<feature type="chain" id="PRO_0000460632" description="FERM and PDZ domain-containing protein 2">
    <location>
        <begin position="1"/>
        <end position="1392"/>
    </location>
</feature>
<feature type="domain" description="KIND" evidence="4">
    <location>
        <begin position="15"/>
        <end position="197"/>
    </location>
</feature>
<feature type="domain" description="FERM" evidence="2">
    <location>
        <begin position="342"/>
        <end position="642"/>
    </location>
</feature>
<feature type="domain" description="PDZ 1" evidence="3">
    <location>
        <begin position="775"/>
        <end position="861"/>
    </location>
</feature>
<feature type="domain" description="PDZ 2" evidence="3">
    <location>
        <begin position="950"/>
        <end position="1035"/>
    </location>
</feature>
<feature type="domain" description="PDZ 3" evidence="3">
    <location>
        <begin position="1079"/>
        <end position="1167"/>
    </location>
</feature>
<feature type="region of interest" description="Disordered" evidence="5">
    <location>
        <begin position="211"/>
        <end position="246"/>
    </location>
</feature>
<feature type="region of interest" description="Disordered" evidence="5">
    <location>
        <begin position="903"/>
        <end position="930"/>
    </location>
</feature>
<feature type="region of interest" description="Interaction with GRIN2A and GRIN2B" evidence="7">
    <location>
        <begin position="937"/>
        <end position="1027"/>
    </location>
</feature>
<feature type="region of interest" description="Disordered" evidence="5">
    <location>
        <begin position="1186"/>
        <end position="1236"/>
    </location>
</feature>
<feature type="compositionally biased region" description="Basic and acidic residues" evidence="5">
    <location>
        <begin position="908"/>
        <end position="917"/>
    </location>
</feature>
<feature type="compositionally biased region" description="Basic and acidic residues" evidence="5">
    <location>
        <begin position="1220"/>
        <end position="1236"/>
    </location>
</feature>
<feature type="strand" evidence="12">
    <location>
        <begin position="940"/>
        <end position="946"/>
    </location>
</feature>
<feature type="strand" evidence="12">
    <location>
        <begin position="953"/>
        <end position="958"/>
    </location>
</feature>
<feature type="helix" evidence="12">
    <location>
        <begin position="965"/>
        <end position="967"/>
    </location>
</feature>
<feature type="strand" evidence="12">
    <location>
        <begin position="969"/>
        <end position="974"/>
    </location>
</feature>
<feature type="helix" evidence="12">
    <location>
        <begin position="979"/>
        <end position="983"/>
    </location>
</feature>
<feature type="strand" evidence="12">
    <location>
        <begin position="991"/>
        <end position="995"/>
    </location>
</feature>
<feature type="helix" evidence="12">
    <location>
        <begin position="1005"/>
        <end position="1012"/>
    </location>
</feature>
<feature type="strand" evidence="12">
    <location>
        <begin position="1017"/>
        <end position="1024"/>
    </location>
</feature>
<evidence type="ECO:0000250" key="1">
    <source>
        <dbReference type="UniProtKB" id="Q68DX3"/>
    </source>
</evidence>
<evidence type="ECO:0000255" key="2">
    <source>
        <dbReference type="PROSITE-ProRule" id="PRU00084"/>
    </source>
</evidence>
<evidence type="ECO:0000255" key="3">
    <source>
        <dbReference type="PROSITE-ProRule" id="PRU00143"/>
    </source>
</evidence>
<evidence type="ECO:0000255" key="4">
    <source>
        <dbReference type="PROSITE-ProRule" id="PRU00709"/>
    </source>
</evidence>
<evidence type="ECO:0000256" key="5">
    <source>
        <dbReference type="SAM" id="MobiDB-lite"/>
    </source>
</evidence>
<evidence type="ECO:0000269" key="6">
    <source>
    </source>
</evidence>
<evidence type="ECO:0000269" key="7">
    <source>
    </source>
</evidence>
<evidence type="ECO:0000305" key="8"/>
<evidence type="ECO:0000312" key="9">
    <source>
        <dbReference type="MGI" id="MGI:2685472"/>
    </source>
</evidence>
<evidence type="ECO:0000312" key="10">
    <source>
        <dbReference type="Proteomes" id="UP000000589"/>
    </source>
</evidence>
<evidence type="ECO:0007744" key="11">
    <source>
        <dbReference type="PDB" id="5ZDS"/>
    </source>
</evidence>
<evidence type="ECO:0007829" key="12">
    <source>
        <dbReference type="PDB" id="5ZDS"/>
    </source>
</evidence>
<protein>
    <recommendedName>
        <fullName evidence="9">FERM and PDZ domain-containing protein 2</fullName>
    </recommendedName>
</protein>
<reference evidence="10" key="1">
    <citation type="journal article" date="2009" name="PLoS Biol.">
        <title>Lineage-specific biology revealed by a finished genome assembly of the mouse.</title>
        <authorList>
            <person name="Church D.M."/>
            <person name="Goodstadt L."/>
            <person name="Hillier L.W."/>
            <person name="Zody M.C."/>
            <person name="Goldstein S."/>
            <person name="She X."/>
            <person name="Bult C.J."/>
            <person name="Agarwala R."/>
            <person name="Cherry J.L."/>
            <person name="DiCuccio M."/>
            <person name="Hlavina W."/>
            <person name="Kapustin Y."/>
            <person name="Meric P."/>
            <person name="Maglott D."/>
            <person name="Birtle Z."/>
            <person name="Marques A.C."/>
            <person name="Graves T."/>
            <person name="Zhou S."/>
            <person name="Teague B."/>
            <person name="Potamousis K."/>
            <person name="Churas C."/>
            <person name="Place M."/>
            <person name="Herschleb J."/>
            <person name="Runnheim R."/>
            <person name="Forrest D."/>
            <person name="Amos-Landgraf J."/>
            <person name="Schwartz D.C."/>
            <person name="Cheng Z."/>
            <person name="Lindblad-Toh K."/>
            <person name="Eichler E.E."/>
            <person name="Ponting C.P."/>
        </authorList>
    </citation>
    <scope>NUCLEOTIDE SEQUENCE [LARGE SCALE GENOMIC DNA]</scope>
    <source>
        <strain evidence="10">C57BL/6J</strain>
    </source>
</reference>
<reference evidence="8" key="2">
    <citation type="journal article" date="2018" name="Cell Rep.">
        <title>Lrit1, a Retinal Transmembrane Protein, Regulates Selective Synapse Formation in Cone Photoreceptor Cells and Visual Acuity.</title>
        <authorList>
            <person name="Ueno A."/>
            <person name="Omori Y."/>
            <person name="Sugita Y."/>
            <person name="Watanabe S."/>
            <person name="Chaya T."/>
            <person name="Kozuka T."/>
            <person name="Kon T."/>
            <person name="Yoshida S."/>
            <person name="Matsushita K."/>
            <person name="Kuwahara R."/>
            <person name="Kajimura N."/>
            <person name="Okada Y."/>
            <person name="Furukawa T."/>
        </authorList>
    </citation>
    <scope>FUNCTION</scope>
    <scope>INTERACTION WITH LRIT1</scope>
</reference>
<reference evidence="11" key="3">
    <citation type="journal article" date="2019" name="Biochem. Biophys. Res. Commun.">
        <title>The second PDZ domain of scaffold protein Frmpd2 binds to GluN2A of NMDA receptors.</title>
        <authorList>
            <person name="Lu X."/>
            <person name="Zhang Q."/>
            <person name="Wang T."/>
        </authorList>
    </citation>
    <scope>X-RAY CRYSTALLOGRAPHY (1.80 ANGSTROMS) OF 939-1026</scope>
    <scope>FUNCTION</scope>
    <scope>INTERACTION WITH GRIN2A AND GRIN2B</scope>
    <scope>SUBCELLULAR LOCATION</scope>
</reference>
<name>FRPD2_MOUSE</name>
<sequence length="1392" mass="152851">MRPLAKDTGMSVASVTLASALQVRGEALSEEEIWSLLSLAAERLLEDLRNDSSDYVVCPWSLLLSAAGGLSFQDHVSHIEAAPFKAPELLQGSNEEGQPDASQMHVYSLGMTLYWSAGFRVPPNQPLQLQEPVHSLLLAMCEDQPRRRQPLQAVLEACRIHQEEVAVYPAPASLHISRLVGLVLGTISEVERRVVEENACEQRNRSCSLRSRLHQADGESPGAPASDALQPRRVSERSAETQSSLERCTAHSRNSFVNSTFAGAGPCDCEESPWYGSEPMLLAEAESSQPATSSPRNFLQRKGKFSRPEFILLAGEAPVTLHLPGSIVTKKGKSYLALRDLCVVLLNGRCLEVKCDMESTAGAVFNAVMSFANLEETTYFGLAYVEGEEFFFLDKDTRLCKVAPEGWREQHPKGSVDTFTLFLRIRFFVGHYRLLRHSLTRHQFYLQLRKDILEERLYCNDETLLQLGVLALQAEFGSYPKEQVEGKAYFRIQDYIPARLIERMTAIRVQVEVSEMHRLSSAPWGEDAELEFLEIVQQLPEYGVLVHRVSPEKKRPEGKMALGVCTKGIIVYEVRGSRRIATSQFPWRETGMISTHRKKLTITSSTTGKKYTFVTNSSKTCKYLLGLCSSQHWFNAQTGSKHPSHRFTGQDKFAQIASLSSAHQTQANPITWIQKLSCSENELCVPRLQDATGGQLGTSMENKQGFKEPGKERIGSSPYTGGEQLHSIGLNQKPAQTVFGTAGHSMCAGSNCLGRRTQICCFDSVSGSQNSKRKGLFGEPNQDIVCVMLKRDPVHGFGFVINEGEDAEQTRSGIFISSLIPGGPAERAKKIKPGGKILALNHISLEGFTFSMAVRMIQNSPDDMELIISQPKGVCGTIHSEEKNSTASSGMFCTDILSNRCQGRQSPHIHDQDRSVRGTEMAQGAGSCPPSPLQTNTGEIYFVELVKEDGTLGFSVTGGINTSVPHGGIYVKSIIPGGPAAKEGQILQGDRLLQVDGVSLCGLTHKQAVQCLKGPGQVARLVLERRGPRAAPQCPSADDRMGDVHMAVSLVTARPGRPASSVSVTDGPKFEVKLKKNSRGLGFSFVQMERGNCIHTKSDLVRIKRLFPGQPAEEHGAIAAGDIILAVNGKPIEGLAFQEVLHLLRGAPEEVTLLLCRPPPGILPEMEPGWQTPELSGDQRLTMATCAGSEQSPSLDQEDNWRDSTSLDAGEGLSPGPESSYKDVRQVKGDREKERPWAKSWMHPMESHPHVCKLHPEPETPALATSLEKDMRQNCYSVCDIRRLGSLELDRDGADGATCFLPESSSLTVDYEEYLTLTSASAGQLPCEECLEADSETIPLPQFCSLGALLKSSLPEESQGSESDWEDLDEPVDRDEVLRWTRSARQPLAAEP</sequence>
<organism evidence="10">
    <name type="scientific">Mus musculus</name>
    <name type="common">Mouse</name>
    <dbReference type="NCBI Taxonomy" id="10090"/>
    <lineage>
        <taxon>Eukaryota</taxon>
        <taxon>Metazoa</taxon>
        <taxon>Chordata</taxon>
        <taxon>Craniata</taxon>
        <taxon>Vertebrata</taxon>
        <taxon>Euteleostomi</taxon>
        <taxon>Mammalia</taxon>
        <taxon>Eutheria</taxon>
        <taxon>Euarchontoglires</taxon>
        <taxon>Glires</taxon>
        <taxon>Rodentia</taxon>
        <taxon>Myomorpha</taxon>
        <taxon>Muroidea</taxon>
        <taxon>Muridae</taxon>
        <taxon>Murinae</taxon>
        <taxon>Mus</taxon>
        <taxon>Mus</taxon>
    </lineage>
</organism>
<accession>A0A140LI67</accession>
<gene>
    <name evidence="9" type="primary">Frmpd2</name>
    <name evidence="9" type="synonym">Gm626</name>
</gene>
<proteinExistence type="evidence at protein level"/>
<dbReference type="PDB" id="5ZDS">
    <property type="method" value="X-ray"/>
    <property type="resolution" value="1.80 A"/>
    <property type="chains" value="A=934-1027"/>
</dbReference>
<dbReference type="PDBsum" id="5ZDS"/>
<dbReference type="SMR" id="A0A140LI67"/>
<dbReference type="FunCoup" id="A0A140LI67">
    <property type="interactions" value="7"/>
</dbReference>
<dbReference type="IntAct" id="A0A140LI67">
    <property type="interactions" value="1"/>
</dbReference>
<dbReference type="STRING" id="10090.ENSMUSP00000146693"/>
<dbReference type="PhosphoSitePlus" id="A0A140LI67"/>
<dbReference type="ProteomicsDB" id="349237"/>
<dbReference type="Antibodypedia" id="13728">
    <property type="antibodies" value="58 antibodies from 20 providers"/>
</dbReference>
<dbReference type="Ensembl" id="ENSMUST00000208577.2">
    <property type="protein sequence ID" value="ENSMUSP00000146693.2"/>
    <property type="gene ID" value="ENSMUSG00000108841.2"/>
</dbReference>
<dbReference type="AGR" id="MGI:2685472"/>
<dbReference type="MGI" id="MGI:2685472">
    <property type="gene designation" value="Frmpd2"/>
</dbReference>
<dbReference type="VEuPathDB" id="HostDB:ENSMUSG00000108841"/>
<dbReference type="GeneTree" id="ENSGT00940000161964"/>
<dbReference type="InParanoid" id="A0A140LI67"/>
<dbReference type="OMA" id="LAMCEDQ"/>
<dbReference type="OrthoDB" id="165498at2759"/>
<dbReference type="ChiTaRS" id="Frmpd2">
    <property type="organism name" value="mouse"/>
</dbReference>
<dbReference type="Proteomes" id="UP000000589">
    <property type="component" value="Chromosome 14"/>
</dbReference>
<dbReference type="RNAct" id="A0A140LI67">
    <property type="molecule type" value="protein"/>
</dbReference>
<dbReference type="Bgee" id="ENSMUSG00000108841">
    <property type="expression patterns" value="Expressed in retinal neural layer and 57 other cell types or tissues"/>
</dbReference>
<dbReference type="ExpressionAtlas" id="A0A140LI67">
    <property type="expression patterns" value="baseline and differential"/>
</dbReference>
<dbReference type="GO" id="GO:0016323">
    <property type="term" value="C:basolateral plasma membrane"/>
    <property type="evidence" value="ECO:0007669"/>
    <property type="project" value="UniProtKB-SubCell"/>
</dbReference>
<dbReference type="GO" id="GO:0005923">
    <property type="term" value="C:bicellular tight junction"/>
    <property type="evidence" value="ECO:0007669"/>
    <property type="project" value="UniProtKB-SubCell"/>
</dbReference>
<dbReference type="GO" id="GO:0005737">
    <property type="term" value="C:cytoplasm"/>
    <property type="evidence" value="ECO:0007669"/>
    <property type="project" value="UniProtKB-SubCell"/>
</dbReference>
<dbReference type="GO" id="GO:0005856">
    <property type="term" value="C:cytoskeleton"/>
    <property type="evidence" value="ECO:0007669"/>
    <property type="project" value="InterPro"/>
</dbReference>
<dbReference type="GO" id="GO:0014069">
    <property type="term" value="C:postsynaptic density"/>
    <property type="evidence" value="ECO:0007669"/>
    <property type="project" value="UniProtKB-SubCell"/>
</dbReference>
<dbReference type="GO" id="GO:0005545">
    <property type="term" value="F:1-phosphatidylinositol binding"/>
    <property type="evidence" value="ECO:0007669"/>
    <property type="project" value="Ensembl"/>
</dbReference>
<dbReference type="GO" id="GO:0070830">
    <property type="term" value="P:bicellular tight junction assembly"/>
    <property type="evidence" value="ECO:0007669"/>
    <property type="project" value="Ensembl"/>
</dbReference>
<dbReference type="CDD" id="cd14473">
    <property type="entry name" value="FERM_B-lobe"/>
    <property type="match status" value="1"/>
</dbReference>
<dbReference type="CDD" id="cd06792">
    <property type="entry name" value="PDZ2-PTPN13_FRMPD2-like"/>
    <property type="match status" value="1"/>
</dbReference>
<dbReference type="CDD" id="cd06695">
    <property type="entry name" value="PDZ3_PTPN13_FRMPD2-like"/>
    <property type="match status" value="1"/>
</dbReference>
<dbReference type="FunFam" id="2.30.42.10:FF:000084">
    <property type="entry name" value="Tyrosine-protein phosphatase non-receptor type 13"/>
    <property type="match status" value="1"/>
</dbReference>
<dbReference type="FunFam" id="2.30.42.10:FF:000086">
    <property type="entry name" value="Tyrosine-protein phosphatase non-receptor type 13"/>
    <property type="match status" value="1"/>
</dbReference>
<dbReference type="Gene3D" id="1.20.80.10">
    <property type="match status" value="1"/>
</dbReference>
<dbReference type="Gene3D" id="2.30.42.10">
    <property type="match status" value="3"/>
</dbReference>
<dbReference type="Gene3D" id="3.10.20.90">
    <property type="entry name" value="Phosphatidylinositol 3-kinase Catalytic Subunit, Chain A, domain 1"/>
    <property type="match status" value="1"/>
</dbReference>
<dbReference type="Gene3D" id="2.30.29.30">
    <property type="entry name" value="Pleckstrin-homology domain (PH domain)/Phosphotyrosine-binding domain (PTB)"/>
    <property type="match status" value="1"/>
</dbReference>
<dbReference type="Gene3D" id="1.10.510.10">
    <property type="entry name" value="Transferase(Phosphotransferase) domain 1"/>
    <property type="match status" value="1"/>
</dbReference>
<dbReference type="InterPro" id="IPR019749">
    <property type="entry name" value="Band_41_domain"/>
</dbReference>
<dbReference type="InterPro" id="IPR014352">
    <property type="entry name" value="FERM/acyl-CoA-bd_prot_sf"/>
</dbReference>
<dbReference type="InterPro" id="IPR035963">
    <property type="entry name" value="FERM_2"/>
</dbReference>
<dbReference type="InterPro" id="IPR019748">
    <property type="entry name" value="FERM_central"/>
</dbReference>
<dbReference type="InterPro" id="IPR000299">
    <property type="entry name" value="FERM_domain"/>
</dbReference>
<dbReference type="InterPro" id="IPR018979">
    <property type="entry name" value="FERM_N"/>
</dbReference>
<dbReference type="InterPro" id="IPR018980">
    <property type="entry name" value="FERM_PH-like_C"/>
</dbReference>
<dbReference type="InterPro" id="IPR011019">
    <property type="entry name" value="KIND_dom"/>
</dbReference>
<dbReference type="InterPro" id="IPR052074">
    <property type="entry name" value="NonRcpt_TyrProt_Phosphatase"/>
</dbReference>
<dbReference type="InterPro" id="IPR001478">
    <property type="entry name" value="PDZ"/>
</dbReference>
<dbReference type="InterPro" id="IPR036034">
    <property type="entry name" value="PDZ_sf"/>
</dbReference>
<dbReference type="InterPro" id="IPR011993">
    <property type="entry name" value="PH-like_dom_sf"/>
</dbReference>
<dbReference type="InterPro" id="IPR029071">
    <property type="entry name" value="Ubiquitin-like_domsf"/>
</dbReference>
<dbReference type="PANTHER" id="PTHR46900:SF4">
    <property type="entry name" value="FERM AND PDZ DOMAIN CONTAINING 2"/>
    <property type="match status" value="1"/>
</dbReference>
<dbReference type="PANTHER" id="PTHR46900">
    <property type="entry name" value="TYROSINE-PROTEIN PHOSPHATASE NON-RECEPTOR TYPE 13"/>
    <property type="match status" value="1"/>
</dbReference>
<dbReference type="Pfam" id="PF09380">
    <property type="entry name" value="FERM_C"/>
    <property type="match status" value="1"/>
</dbReference>
<dbReference type="Pfam" id="PF00373">
    <property type="entry name" value="FERM_M"/>
    <property type="match status" value="1"/>
</dbReference>
<dbReference type="Pfam" id="PF09379">
    <property type="entry name" value="FERM_N"/>
    <property type="match status" value="1"/>
</dbReference>
<dbReference type="Pfam" id="PF00595">
    <property type="entry name" value="PDZ"/>
    <property type="match status" value="3"/>
</dbReference>
<dbReference type="PRINTS" id="PR00935">
    <property type="entry name" value="BAND41"/>
</dbReference>
<dbReference type="SMART" id="SM00295">
    <property type="entry name" value="B41"/>
    <property type="match status" value="1"/>
</dbReference>
<dbReference type="SMART" id="SM01196">
    <property type="entry name" value="FERM_C"/>
    <property type="match status" value="1"/>
</dbReference>
<dbReference type="SMART" id="SM00750">
    <property type="entry name" value="KIND"/>
    <property type="match status" value="1"/>
</dbReference>
<dbReference type="SMART" id="SM00228">
    <property type="entry name" value="PDZ"/>
    <property type="match status" value="3"/>
</dbReference>
<dbReference type="SUPFAM" id="SSF50156">
    <property type="entry name" value="PDZ domain-like"/>
    <property type="match status" value="3"/>
</dbReference>
<dbReference type="SUPFAM" id="SSF50729">
    <property type="entry name" value="PH domain-like"/>
    <property type="match status" value="1"/>
</dbReference>
<dbReference type="SUPFAM" id="SSF47031">
    <property type="entry name" value="Second domain of FERM"/>
    <property type="match status" value="1"/>
</dbReference>
<dbReference type="SUPFAM" id="SSF54236">
    <property type="entry name" value="Ubiquitin-like"/>
    <property type="match status" value="1"/>
</dbReference>
<dbReference type="PROSITE" id="PS50057">
    <property type="entry name" value="FERM_3"/>
    <property type="match status" value="1"/>
</dbReference>
<dbReference type="PROSITE" id="PS51377">
    <property type="entry name" value="KIND"/>
    <property type="match status" value="1"/>
</dbReference>
<dbReference type="PROSITE" id="PS50106">
    <property type="entry name" value="PDZ"/>
    <property type="match status" value="3"/>
</dbReference>